<organism>
    <name type="scientific">Mycoplasmoides gallisepticum (strain R(low / passage 15 / clone 2))</name>
    <name type="common">Mycoplasma gallisepticum</name>
    <dbReference type="NCBI Taxonomy" id="710127"/>
    <lineage>
        <taxon>Bacteria</taxon>
        <taxon>Bacillati</taxon>
        <taxon>Mycoplasmatota</taxon>
        <taxon>Mycoplasmoidales</taxon>
        <taxon>Mycoplasmoidaceae</taxon>
        <taxon>Mycoplasmoides</taxon>
    </lineage>
</organism>
<sequence length="456" mass="51888">MLKVAIVGKPNVGKSTLFNRLIKNRIAIVDDTPGITRDRIFGDVEWLTKRFQIIDTGGLTTESDVFQRAIEQQVQFAIDEADIILFVCSYKEGINADDHYAAKLLKKHKNKKIIFVLNKIENQNKDQLNLSSYFSLGFGKPMIISAEHAIGIGDLLDEIIGLKDQFGNKKEQELVATFCIIGKPNVGKSSLLNQLLKKERVLVSDIPGTTRDAIDATFSYNKELYKVIDTAGIRRKGKIATRIEKFSVQRTQQAISRSKMILLMLDGSVDLSEQDEVIGGLCYEANLPTIIVVNKWDLVKKDDKTMELFKKQIRSKFKYLPWSPIIFISAKANLRIDTIFQTIKLIQAQLKIKISTSLLNDVVQKAHMINQPPIFNGNRLSITYTTQAQGQIPTFVLFCNNPDYLHFSYARYLENKIREAFGLSYVPITLYFKSKNARNRKLSKDVKFKQTGYDLE</sequence>
<comment type="function">
    <text evidence="1">GTPase that plays an essential role in the late steps of ribosome biogenesis.</text>
</comment>
<comment type="subunit">
    <text evidence="1">Associates with the 50S ribosomal subunit.</text>
</comment>
<comment type="similarity">
    <text evidence="1">Belongs to the TRAFAC class TrmE-Era-EngA-EngB-Septin-like GTPase superfamily. EngA (Der) GTPase family.</text>
</comment>
<name>DER_MYCGA</name>
<evidence type="ECO:0000255" key="1">
    <source>
        <dbReference type="HAMAP-Rule" id="MF_00195"/>
    </source>
</evidence>
<protein>
    <recommendedName>
        <fullName evidence="1">GTPase Der</fullName>
    </recommendedName>
    <alternativeName>
        <fullName evidence="1">GTP-binding protein EngA</fullName>
    </alternativeName>
</protein>
<dbReference type="EMBL" id="AE015450">
    <property type="protein sequence ID" value="AAP56508.2"/>
    <property type="molecule type" value="Genomic_DNA"/>
</dbReference>
<dbReference type="RefSeq" id="WP_011113390.1">
    <property type="nucleotide sequence ID" value="NC_004829.2"/>
</dbReference>
<dbReference type="SMR" id="Q7NBV2"/>
<dbReference type="KEGG" id="mga:MGA_0898"/>
<dbReference type="HOGENOM" id="CLU_016077_6_2_14"/>
<dbReference type="OrthoDB" id="9805918at2"/>
<dbReference type="Proteomes" id="UP000001418">
    <property type="component" value="Chromosome"/>
</dbReference>
<dbReference type="GO" id="GO:0005525">
    <property type="term" value="F:GTP binding"/>
    <property type="evidence" value="ECO:0007669"/>
    <property type="project" value="UniProtKB-UniRule"/>
</dbReference>
<dbReference type="GO" id="GO:0043022">
    <property type="term" value="F:ribosome binding"/>
    <property type="evidence" value="ECO:0007669"/>
    <property type="project" value="TreeGrafter"/>
</dbReference>
<dbReference type="GO" id="GO:0042254">
    <property type="term" value="P:ribosome biogenesis"/>
    <property type="evidence" value="ECO:0007669"/>
    <property type="project" value="UniProtKB-KW"/>
</dbReference>
<dbReference type="CDD" id="cd01894">
    <property type="entry name" value="EngA1"/>
    <property type="match status" value="1"/>
</dbReference>
<dbReference type="CDD" id="cd01895">
    <property type="entry name" value="EngA2"/>
    <property type="match status" value="1"/>
</dbReference>
<dbReference type="FunFam" id="3.30.300.20:FF:000004">
    <property type="entry name" value="GTPase Der"/>
    <property type="match status" value="1"/>
</dbReference>
<dbReference type="FunFam" id="3.40.50.300:FF:000040">
    <property type="entry name" value="GTPase Der"/>
    <property type="match status" value="1"/>
</dbReference>
<dbReference type="FunFam" id="3.40.50.300:FF:000057">
    <property type="entry name" value="GTPase Der"/>
    <property type="match status" value="1"/>
</dbReference>
<dbReference type="Gene3D" id="3.30.300.20">
    <property type="match status" value="1"/>
</dbReference>
<dbReference type="Gene3D" id="3.40.50.300">
    <property type="entry name" value="P-loop containing nucleotide triphosphate hydrolases"/>
    <property type="match status" value="2"/>
</dbReference>
<dbReference type="HAMAP" id="MF_00195">
    <property type="entry name" value="GTPase_Der"/>
    <property type="match status" value="1"/>
</dbReference>
<dbReference type="InterPro" id="IPR031166">
    <property type="entry name" value="G_ENGA"/>
</dbReference>
<dbReference type="InterPro" id="IPR006073">
    <property type="entry name" value="GTP-bd"/>
</dbReference>
<dbReference type="InterPro" id="IPR016484">
    <property type="entry name" value="GTPase_Der"/>
</dbReference>
<dbReference type="InterPro" id="IPR032859">
    <property type="entry name" value="KH_dom-like"/>
</dbReference>
<dbReference type="InterPro" id="IPR015946">
    <property type="entry name" value="KH_dom-like_a/b"/>
</dbReference>
<dbReference type="InterPro" id="IPR027417">
    <property type="entry name" value="P-loop_NTPase"/>
</dbReference>
<dbReference type="InterPro" id="IPR005225">
    <property type="entry name" value="Small_GTP-bd"/>
</dbReference>
<dbReference type="NCBIfam" id="TIGR03594">
    <property type="entry name" value="GTPase_EngA"/>
    <property type="match status" value="1"/>
</dbReference>
<dbReference type="NCBIfam" id="TIGR00231">
    <property type="entry name" value="small_GTP"/>
    <property type="match status" value="2"/>
</dbReference>
<dbReference type="PANTHER" id="PTHR43834">
    <property type="entry name" value="GTPASE DER"/>
    <property type="match status" value="1"/>
</dbReference>
<dbReference type="PANTHER" id="PTHR43834:SF6">
    <property type="entry name" value="GTPASE DER"/>
    <property type="match status" value="1"/>
</dbReference>
<dbReference type="Pfam" id="PF14714">
    <property type="entry name" value="KH_dom-like"/>
    <property type="match status" value="1"/>
</dbReference>
<dbReference type="Pfam" id="PF01926">
    <property type="entry name" value="MMR_HSR1"/>
    <property type="match status" value="2"/>
</dbReference>
<dbReference type="PIRSF" id="PIRSF006485">
    <property type="entry name" value="GTP-binding_EngA"/>
    <property type="match status" value="1"/>
</dbReference>
<dbReference type="PRINTS" id="PR00449">
    <property type="entry name" value="RASTRNSFRMNG"/>
</dbReference>
<dbReference type="SUPFAM" id="SSF52540">
    <property type="entry name" value="P-loop containing nucleoside triphosphate hydrolases"/>
    <property type="match status" value="2"/>
</dbReference>
<dbReference type="PROSITE" id="PS51712">
    <property type="entry name" value="G_ENGA"/>
    <property type="match status" value="2"/>
</dbReference>
<proteinExistence type="inferred from homology"/>
<accession>Q7NBV2</accession>
<keyword id="KW-0342">GTP-binding</keyword>
<keyword id="KW-0547">Nucleotide-binding</keyword>
<keyword id="KW-1185">Reference proteome</keyword>
<keyword id="KW-0677">Repeat</keyword>
<keyword id="KW-0690">Ribosome biogenesis</keyword>
<reference key="1">
    <citation type="journal article" date="2003" name="Microbiology">
        <title>The complete genome sequence of the avian pathogen Mycoplasma gallisepticum strain R(low).</title>
        <authorList>
            <person name="Papazisi L."/>
            <person name="Gorton T.S."/>
            <person name="Kutish G."/>
            <person name="Markham P.F."/>
            <person name="Browning G.F."/>
            <person name="Nguyen D.K."/>
            <person name="Swartzell S."/>
            <person name="Madan A."/>
            <person name="Mahairas G."/>
            <person name="Geary S.J."/>
        </authorList>
    </citation>
    <scope>NUCLEOTIDE SEQUENCE [LARGE SCALE GENOMIC DNA]</scope>
    <source>
        <strain>R(low / passage 15 / clone 2)</strain>
    </source>
</reference>
<gene>
    <name evidence="1" type="primary">der</name>
    <name type="synonym">engA</name>
    <name type="ordered locus">MYCGA1580</name>
    <name type="ORF">MGA_0898</name>
</gene>
<feature type="chain" id="PRO_0000179011" description="GTPase Der">
    <location>
        <begin position="1"/>
        <end position="456"/>
    </location>
</feature>
<feature type="domain" description="EngA-type G 1">
    <location>
        <begin position="2"/>
        <end position="167"/>
    </location>
</feature>
<feature type="domain" description="EngA-type G 2">
    <location>
        <begin position="176"/>
        <end position="351"/>
    </location>
</feature>
<feature type="domain" description="KH-like" evidence="1">
    <location>
        <begin position="352"/>
        <end position="436"/>
    </location>
</feature>
<feature type="binding site" evidence="1">
    <location>
        <begin position="8"/>
        <end position="15"/>
    </location>
    <ligand>
        <name>GTP</name>
        <dbReference type="ChEBI" id="CHEBI:37565"/>
        <label>1</label>
    </ligand>
</feature>
<feature type="binding site" evidence="1">
    <location>
        <begin position="55"/>
        <end position="59"/>
    </location>
    <ligand>
        <name>GTP</name>
        <dbReference type="ChEBI" id="CHEBI:37565"/>
        <label>1</label>
    </ligand>
</feature>
<feature type="binding site" evidence="1">
    <location>
        <begin position="118"/>
        <end position="121"/>
    </location>
    <ligand>
        <name>GTP</name>
        <dbReference type="ChEBI" id="CHEBI:37565"/>
        <label>1</label>
    </ligand>
</feature>
<feature type="binding site" evidence="1">
    <location>
        <begin position="182"/>
        <end position="189"/>
    </location>
    <ligand>
        <name>GTP</name>
        <dbReference type="ChEBI" id="CHEBI:37565"/>
        <label>2</label>
    </ligand>
</feature>
<feature type="binding site" evidence="1">
    <location>
        <begin position="229"/>
        <end position="233"/>
    </location>
    <ligand>
        <name>GTP</name>
        <dbReference type="ChEBI" id="CHEBI:37565"/>
        <label>2</label>
    </ligand>
</feature>
<feature type="binding site" evidence="1">
    <location>
        <begin position="294"/>
        <end position="297"/>
    </location>
    <ligand>
        <name>GTP</name>
        <dbReference type="ChEBI" id="CHEBI:37565"/>
        <label>2</label>
    </ligand>
</feature>